<proteinExistence type="inferred from homology"/>
<reference key="1">
    <citation type="submission" date="2007-11" db="EMBL/GenBank/DDBJ databases">
        <authorList>
            <consortium name="The Salmonella enterica serovar Arizonae Genome Sequencing Project"/>
            <person name="McClelland M."/>
            <person name="Sanderson E.K."/>
            <person name="Porwollik S."/>
            <person name="Spieth J."/>
            <person name="Clifton W.S."/>
            <person name="Fulton R."/>
            <person name="Chunyan W."/>
            <person name="Wollam A."/>
            <person name="Shah N."/>
            <person name="Pepin K."/>
            <person name="Bhonagiri V."/>
            <person name="Nash W."/>
            <person name="Johnson M."/>
            <person name="Thiruvilangam P."/>
            <person name="Wilson R."/>
        </authorList>
    </citation>
    <scope>NUCLEOTIDE SEQUENCE [LARGE SCALE GENOMIC DNA]</scope>
    <source>
        <strain>ATCC BAA-731 / CDC346-86 / RSK2980</strain>
    </source>
</reference>
<comment type="function">
    <text evidence="1">Catalyzes the condensation of carbamoyl phosphate and aspartate to form carbamoyl aspartate and inorganic phosphate, the committed step in the de novo pyrimidine nucleotide biosynthesis pathway.</text>
</comment>
<comment type="catalytic activity">
    <reaction evidence="1">
        <text>carbamoyl phosphate + L-aspartate = N-carbamoyl-L-aspartate + phosphate + H(+)</text>
        <dbReference type="Rhea" id="RHEA:20013"/>
        <dbReference type="ChEBI" id="CHEBI:15378"/>
        <dbReference type="ChEBI" id="CHEBI:29991"/>
        <dbReference type="ChEBI" id="CHEBI:32814"/>
        <dbReference type="ChEBI" id="CHEBI:43474"/>
        <dbReference type="ChEBI" id="CHEBI:58228"/>
        <dbReference type="EC" id="2.1.3.2"/>
    </reaction>
</comment>
<comment type="pathway">
    <text evidence="1">Pyrimidine metabolism; UMP biosynthesis via de novo pathway; (S)-dihydroorotate from bicarbonate: step 2/3.</text>
</comment>
<comment type="subunit">
    <text evidence="1">Heterododecamer (2C3:3R2) of six catalytic PyrB chains organized as two trimers (C3), and six regulatory PyrI chains organized as three dimers (R2).</text>
</comment>
<comment type="similarity">
    <text evidence="1">Belongs to the aspartate/ornithine carbamoyltransferase superfamily. ATCase family.</text>
</comment>
<feature type="chain" id="PRO_1000073740" description="Aspartate carbamoyltransferase catalytic subunit">
    <location>
        <begin position="1"/>
        <end position="311"/>
    </location>
</feature>
<feature type="binding site" evidence="1">
    <location>
        <position position="55"/>
    </location>
    <ligand>
        <name>carbamoyl phosphate</name>
        <dbReference type="ChEBI" id="CHEBI:58228"/>
    </ligand>
</feature>
<feature type="binding site" evidence="1">
    <location>
        <position position="56"/>
    </location>
    <ligand>
        <name>carbamoyl phosphate</name>
        <dbReference type="ChEBI" id="CHEBI:58228"/>
    </ligand>
</feature>
<feature type="binding site" evidence="1">
    <location>
        <position position="85"/>
    </location>
    <ligand>
        <name>L-aspartate</name>
        <dbReference type="ChEBI" id="CHEBI:29991"/>
    </ligand>
</feature>
<feature type="binding site" evidence="1">
    <location>
        <position position="106"/>
    </location>
    <ligand>
        <name>carbamoyl phosphate</name>
        <dbReference type="ChEBI" id="CHEBI:58228"/>
    </ligand>
</feature>
<feature type="binding site" evidence="1">
    <location>
        <position position="135"/>
    </location>
    <ligand>
        <name>carbamoyl phosphate</name>
        <dbReference type="ChEBI" id="CHEBI:58228"/>
    </ligand>
</feature>
<feature type="binding site" evidence="1">
    <location>
        <position position="138"/>
    </location>
    <ligand>
        <name>carbamoyl phosphate</name>
        <dbReference type="ChEBI" id="CHEBI:58228"/>
    </ligand>
</feature>
<feature type="binding site" evidence="1">
    <location>
        <position position="168"/>
    </location>
    <ligand>
        <name>L-aspartate</name>
        <dbReference type="ChEBI" id="CHEBI:29991"/>
    </ligand>
</feature>
<feature type="binding site" evidence="1">
    <location>
        <position position="230"/>
    </location>
    <ligand>
        <name>L-aspartate</name>
        <dbReference type="ChEBI" id="CHEBI:29991"/>
    </ligand>
</feature>
<feature type="binding site" evidence="1">
    <location>
        <position position="268"/>
    </location>
    <ligand>
        <name>carbamoyl phosphate</name>
        <dbReference type="ChEBI" id="CHEBI:58228"/>
    </ligand>
</feature>
<feature type="binding site" evidence="1">
    <location>
        <position position="269"/>
    </location>
    <ligand>
        <name>carbamoyl phosphate</name>
        <dbReference type="ChEBI" id="CHEBI:58228"/>
    </ligand>
</feature>
<evidence type="ECO:0000255" key="1">
    <source>
        <dbReference type="HAMAP-Rule" id="MF_00001"/>
    </source>
</evidence>
<sequence length="311" mass="34479">MANPLYQKHIISINDLSRDDLNLVLATAAKLKAHPQPELLKHKVIASCFFEASTRTRLSFETSMHRLGASVVGFSDSANTSLGKKGETLADTISVISTYVDAIVMRHPQEGAARLATEFSGKVPVLNAGDGSNQHPTQTLLDLFTIQETQGRLDNLHIAMVGDLKYGRTVHSLTQALAKFSGNRFYFIAPEALAMPQYILDMLDEKGMDWSLHGSIEEVMAEVDILYMTRVQKERLDPSEYANVKAQFVLRASDLNGARENMKVLHPLPRIDEITTDVDKTPHAWYFQQAGNGIFARQALLALVLNSELSL</sequence>
<accession>A9MEW2</accession>
<dbReference type="EC" id="2.1.3.2" evidence="1"/>
<dbReference type="EMBL" id="CP000880">
    <property type="protein sequence ID" value="ABX23028.1"/>
    <property type="molecule type" value="Genomic_DNA"/>
</dbReference>
<dbReference type="SMR" id="A9MEW2"/>
<dbReference type="STRING" id="41514.SARI_03191"/>
<dbReference type="KEGG" id="ses:SARI_03191"/>
<dbReference type="HOGENOM" id="CLU_043846_1_2_6"/>
<dbReference type="UniPathway" id="UPA00070">
    <property type="reaction ID" value="UER00116"/>
</dbReference>
<dbReference type="Proteomes" id="UP000002084">
    <property type="component" value="Chromosome"/>
</dbReference>
<dbReference type="GO" id="GO:0005829">
    <property type="term" value="C:cytosol"/>
    <property type="evidence" value="ECO:0007669"/>
    <property type="project" value="TreeGrafter"/>
</dbReference>
<dbReference type="GO" id="GO:0016597">
    <property type="term" value="F:amino acid binding"/>
    <property type="evidence" value="ECO:0007669"/>
    <property type="project" value="InterPro"/>
</dbReference>
<dbReference type="GO" id="GO:0004070">
    <property type="term" value="F:aspartate carbamoyltransferase activity"/>
    <property type="evidence" value="ECO:0007669"/>
    <property type="project" value="UniProtKB-UniRule"/>
</dbReference>
<dbReference type="GO" id="GO:0006207">
    <property type="term" value="P:'de novo' pyrimidine nucleobase biosynthetic process"/>
    <property type="evidence" value="ECO:0007669"/>
    <property type="project" value="InterPro"/>
</dbReference>
<dbReference type="GO" id="GO:0044205">
    <property type="term" value="P:'de novo' UMP biosynthetic process"/>
    <property type="evidence" value="ECO:0007669"/>
    <property type="project" value="UniProtKB-UniRule"/>
</dbReference>
<dbReference type="GO" id="GO:0006520">
    <property type="term" value="P:amino acid metabolic process"/>
    <property type="evidence" value="ECO:0007669"/>
    <property type="project" value="InterPro"/>
</dbReference>
<dbReference type="FunFam" id="3.40.50.1370:FF:000001">
    <property type="entry name" value="Aspartate carbamoyltransferase"/>
    <property type="match status" value="1"/>
</dbReference>
<dbReference type="FunFam" id="3.40.50.1370:FF:000002">
    <property type="entry name" value="Aspartate carbamoyltransferase 2"/>
    <property type="match status" value="1"/>
</dbReference>
<dbReference type="Gene3D" id="3.40.50.1370">
    <property type="entry name" value="Aspartate/ornithine carbamoyltransferase"/>
    <property type="match status" value="2"/>
</dbReference>
<dbReference type="HAMAP" id="MF_00001">
    <property type="entry name" value="Asp_carb_tr"/>
    <property type="match status" value="1"/>
</dbReference>
<dbReference type="InterPro" id="IPR006132">
    <property type="entry name" value="Asp/Orn_carbamoyltranf_P-bd"/>
</dbReference>
<dbReference type="InterPro" id="IPR006130">
    <property type="entry name" value="Asp/Orn_carbamoylTrfase"/>
</dbReference>
<dbReference type="InterPro" id="IPR036901">
    <property type="entry name" value="Asp/Orn_carbamoylTrfase_sf"/>
</dbReference>
<dbReference type="InterPro" id="IPR002082">
    <property type="entry name" value="Asp_carbamoyltransf"/>
</dbReference>
<dbReference type="InterPro" id="IPR006131">
    <property type="entry name" value="Asp_carbamoyltransf_Asp/Orn-bd"/>
</dbReference>
<dbReference type="NCBIfam" id="TIGR00670">
    <property type="entry name" value="asp_carb_tr"/>
    <property type="match status" value="1"/>
</dbReference>
<dbReference type="NCBIfam" id="NF002032">
    <property type="entry name" value="PRK00856.1"/>
    <property type="match status" value="1"/>
</dbReference>
<dbReference type="PANTHER" id="PTHR45753:SF6">
    <property type="entry name" value="ASPARTATE CARBAMOYLTRANSFERASE"/>
    <property type="match status" value="1"/>
</dbReference>
<dbReference type="PANTHER" id="PTHR45753">
    <property type="entry name" value="ORNITHINE CARBAMOYLTRANSFERASE, MITOCHONDRIAL"/>
    <property type="match status" value="1"/>
</dbReference>
<dbReference type="Pfam" id="PF00185">
    <property type="entry name" value="OTCace"/>
    <property type="match status" value="1"/>
</dbReference>
<dbReference type="Pfam" id="PF02729">
    <property type="entry name" value="OTCace_N"/>
    <property type="match status" value="1"/>
</dbReference>
<dbReference type="PRINTS" id="PR00100">
    <property type="entry name" value="AOTCASE"/>
</dbReference>
<dbReference type="PRINTS" id="PR00101">
    <property type="entry name" value="ATCASE"/>
</dbReference>
<dbReference type="SUPFAM" id="SSF53671">
    <property type="entry name" value="Aspartate/ornithine carbamoyltransferase"/>
    <property type="match status" value="1"/>
</dbReference>
<dbReference type="PROSITE" id="PS00097">
    <property type="entry name" value="CARBAMOYLTRANSFERASE"/>
    <property type="match status" value="1"/>
</dbReference>
<name>PYRB_SALAR</name>
<keyword id="KW-0665">Pyrimidine biosynthesis</keyword>
<keyword id="KW-1185">Reference proteome</keyword>
<keyword id="KW-0808">Transferase</keyword>
<gene>
    <name evidence="1" type="primary">pyrB</name>
    <name type="ordered locus">SARI_03191</name>
</gene>
<organism>
    <name type="scientific">Salmonella arizonae (strain ATCC BAA-731 / CDC346-86 / RSK2980)</name>
    <dbReference type="NCBI Taxonomy" id="41514"/>
    <lineage>
        <taxon>Bacteria</taxon>
        <taxon>Pseudomonadati</taxon>
        <taxon>Pseudomonadota</taxon>
        <taxon>Gammaproteobacteria</taxon>
        <taxon>Enterobacterales</taxon>
        <taxon>Enterobacteriaceae</taxon>
        <taxon>Salmonella</taxon>
    </lineage>
</organism>
<protein>
    <recommendedName>
        <fullName evidence="1">Aspartate carbamoyltransferase catalytic subunit</fullName>
        <ecNumber evidence="1">2.1.3.2</ecNumber>
    </recommendedName>
    <alternativeName>
        <fullName evidence="1">Aspartate transcarbamylase</fullName>
        <shortName evidence="1">ATCase</shortName>
    </alternativeName>
</protein>